<gene>
    <name evidence="1" type="primary">nuoB</name>
    <name type="ordered locus">Mjls_1549</name>
</gene>
<feature type="chain" id="PRO_0000376282" description="NADH-quinone oxidoreductase subunit B">
    <location>
        <begin position="1"/>
        <end position="184"/>
    </location>
</feature>
<feature type="binding site" evidence="1">
    <location>
        <position position="37"/>
    </location>
    <ligand>
        <name>[4Fe-4S] cluster</name>
        <dbReference type="ChEBI" id="CHEBI:49883"/>
    </ligand>
</feature>
<feature type="binding site" evidence="1">
    <location>
        <position position="38"/>
    </location>
    <ligand>
        <name>[4Fe-4S] cluster</name>
        <dbReference type="ChEBI" id="CHEBI:49883"/>
    </ligand>
</feature>
<feature type="binding site" evidence="1">
    <location>
        <position position="103"/>
    </location>
    <ligand>
        <name>[4Fe-4S] cluster</name>
        <dbReference type="ChEBI" id="CHEBI:49883"/>
    </ligand>
</feature>
<feature type="binding site" evidence="1">
    <location>
        <position position="132"/>
    </location>
    <ligand>
        <name>[4Fe-4S] cluster</name>
        <dbReference type="ChEBI" id="CHEBI:49883"/>
    </ligand>
</feature>
<name>NUOB_MYCSJ</name>
<sequence>MGLEERLPGGILLSTVEKVAGYVRAGSLWPATFGLACCAIEMMSTAGPRFDISRFGMERFSATPRQADLMIVAGRVSQKMAPVLRQIYDQMAEPKWVLAMGVCASSGGMFNNYAIVQGVDHVVPVDIYLPGCPPRPEMLLHAIIKLHEKIQQMPLGVNRDEAIREAEQAALAVPSTIELKGLLR</sequence>
<comment type="function">
    <text evidence="1">NDH-1 shuttles electrons from NADH, via FMN and iron-sulfur (Fe-S) centers, to quinones in the respiratory chain. The immediate electron acceptor for the enzyme in this species is believed to be a menaquinone. Couples the redox reaction to proton translocation (for every two electrons transferred, four hydrogen ions are translocated across the cytoplasmic membrane), and thus conserves the redox energy in a proton gradient.</text>
</comment>
<comment type="catalytic activity">
    <reaction evidence="1">
        <text>a quinone + NADH + 5 H(+)(in) = a quinol + NAD(+) + 4 H(+)(out)</text>
        <dbReference type="Rhea" id="RHEA:57888"/>
        <dbReference type="ChEBI" id="CHEBI:15378"/>
        <dbReference type="ChEBI" id="CHEBI:24646"/>
        <dbReference type="ChEBI" id="CHEBI:57540"/>
        <dbReference type="ChEBI" id="CHEBI:57945"/>
        <dbReference type="ChEBI" id="CHEBI:132124"/>
    </reaction>
</comment>
<comment type="cofactor">
    <cofactor evidence="1">
        <name>[4Fe-4S] cluster</name>
        <dbReference type="ChEBI" id="CHEBI:49883"/>
    </cofactor>
    <text evidence="1">Binds 1 [4Fe-4S] cluster.</text>
</comment>
<comment type="subunit">
    <text evidence="1">NDH-1 is composed of 14 different subunits. Subunits NuoB, C, D, E, F, and G constitute the peripheral sector of the complex.</text>
</comment>
<comment type="subcellular location">
    <subcellularLocation>
        <location evidence="1">Cell membrane</location>
        <topology evidence="1">Peripheral membrane protein</topology>
        <orientation evidence="1">Cytoplasmic side</orientation>
    </subcellularLocation>
</comment>
<comment type="similarity">
    <text evidence="1">Belongs to the complex I 20 kDa subunit family.</text>
</comment>
<protein>
    <recommendedName>
        <fullName evidence="1">NADH-quinone oxidoreductase subunit B</fullName>
        <ecNumber evidence="1">7.1.1.-</ecNumber>
    </recommendedName>
    <alternativeName>
        <fullName evidence="1">NADH dehydrogenase I subunit B</fullName>
    </alternativeName>
    <alternativeName>
        <fullName evidence="1">NDH-1 subunit B</fullName>
    </alternativeName>
</protein>
<dbReference type="EC" id="7.1.1.-" evidence="1"/>
<dbReference type="EMBL" id="CP000580">
    <property type="protein sequence ID" value="ABN97347.1"/>
    <property type="molecule type" value="Genomic_DNA"/>
</dbReference>
<dbReference type="SMR" id="A3PWS0"/>
<dbReference type="KEGG" id="mjl:Mjls_1549"/>
<dbReference type="HOGENOM" id="CLU_055737_7_3_11"/>
<dbReference type="BioCyc" id="MSP164757:G1G8C-1566-MONOMER"/>
<dbReference type="GO" id="GO:0005886">
    <property type="term" value="C:plasma membrane"/>
    <property type="evidence" value="ECO:0007669"/>
    <property type="project" value="UniProtKB-SubCell"/>
</dbReference>
<dbReference type="GO" id="GO:0045271">
    <property type="term" value="C:respiratory chain complex I"/>
    <property type="evidence" value="ECO:0007669"/>
    <property type="project" value="TreeGrafter"/>
</dbReference>
<dbReference type="GO" id="GO:0051539">
    <property type="term" value="F:4 iron, 4 sulfur cluster binding"/>
    <property type="evidence" value="ECO:0007669"/>
    <property type="project" value="UniProtKB-KW"/>
</dbReference>
<dbReference type="GO" id="GO:0005506">
    <property type="term" value="F:iron ion binding"/>
    <property type="evidence" value="ECO:0007669"/>
    <property type="project" value="UniProtKB-UniRule"/>
</dbReference>
<dbReference type="GO" id="GO:0008137">
    <property type="term" value="F:NADH dehydrogenase (ubiquinone) activity"/>
    <property type="evidence" value="ECO:0007669"/>
    <property type="project" value="InterPro"/>
</dbReference>
<dbReference type="GO" id="GO:0050136">
    <property type="term" value="F:NADH:ubiquinone reductase (non-electrogenic) activity"/>
    <property type="evidence" value="ECO:0007669"/>
    <property type="project" value="UniProtKB-UniRule"/>
</dbReference>
<dbReference type="GO" id="GO:0048038">
    <property type="term" value="F:quinone binding"/>
    <property type="evidence" value="ECO:0007669"/>
    <property type="project" value="UniProtKB-KW"/>
</dbReference>
<dbReference type="GO" id="GO:0009060">
    <property type="term" value="P:aerobic respiration"/>
    <property type="evidence" value="ECO:0007669"/>
    <property type="project" value="TreeGrafter"/>
</dbReference>
<dbReference type="GO" id="GO:0015990">
    <property type="term" value="P:electron transport coupled proton transport"/>
    <property type="evidence" value="ECO:0007669"/>
    <property type="project" value="TreeGrafter"/>
</dbReference>
<dbReference type="FunFam" id="3.40.50.12280:FF:000004">
    <property type="entry name" value="NADH-quinone oxidoreductase subunit B"/>
    <property type="match status" value="1"/>
</dbReference>
<dbReference type="Gene3D" id="3.40.50.12280">
    <property type="match status" value="1"/>
</dbReference>
<dbReference type="HAMAP" id="MF_01356">
    <property type="entry name" value="NDH1_NuoB"/>
    <property type="match status" value="1"/>
</dbReference>
<dbReference type="InterPro" id="IPR006137">
    <property type="entry name" value="NADH_UbQ_OxRdtase-like_20kDa"/>
</dbReference>
<dbReference type="InterPro" id="IPR006138">
    <property type="entry name" value="NADH_UQ_OxRdtase_20Kd_su"/>
</dbReference>
<dbReference type="NCBIfam" id="TIGR01957">
    <property type="entry name" value="nuoB_fam"/>
    <property type="match status" value="1"/>
</dbReference>
<dbReference type="NCBIfam" id="NF005012">
    <property type="entry name" value="PRK06411.1"/>
    <property type="match status" value="1"/>
</dbReference>
<dbReference type="PANTHER" id="PTHR11995">
    <property type="entry name" value="NADH DEHYDROGENASE"/>
    <property type="match status" value="1"/>
</dbReference>
<dbReference type="PANTHER" id="PTHR11995:SF14">
    <property type="entry name" value="NADH DEHYDROGENASE [UBIQUINONE] IRON-SULFUR PROTEIN 7, MITOCHONDRIAL"/>
    <property type="match status" value="1"/>
</dbReference>
<dbReference type="Pfam" id="PF01058">
    <property type="entry name" value="Oxidored_q6"/>
    <property type="match status" value="1"/>
</dbReference>
<dbReference type="SUPFAM" id="SSF56770">
    <property type="entry name" value="HydA/Nqo6-like"/>
    <property type="match status" value="1"/>
</dbReference>
<dbReference type="PROSITE" id="PS01150">
    <property type="entry name" value="COMPLEX1_20K"/>
    <property type="match status" value="1"/>
</dbReference>
<keyword id="KW-0004">4Fe-4S</keyword>
<keyword id="KW-1003">Cell membrane</keyword>
<keyword id="KW-0408">Iron</keyword>
<keyword id="KW-0411">Iron-sulfur</keyword>
<keyword id="KW-0472">Membrane</keyword>
<keyword id="KW-0479">Metal-binding</keyword>
<keyword id="KW-0520">NAD</keyword>
<keyword id="KW-0874">Quinone</keyword>
<keyword id="KW-1278">Translocase</keyword>
<keyword id="KW-0813">Transport</keyword>
<organism>
    <name type="scientific">Mycobacterium sp. (strain JLS)</name>
    <dbReference type="NCBI Taxonomy" id="164757"/>
    <lineage>
        <taxon>Bacteria</taxon>
        <taxon>Bacillati</taxon>
        <taxon>Actinomycetota</taxon>
        <taxon>Actinomycetes</taxon>
        <taxon>Mycobacteriales</taxon>
        <taxon>Mycobacteriaceae</taxon>
        <taxon>Mycobacterium</taxon>
    </lineage>
</organism>
<accession>A3PWS0</accession>
<proteinExistence type="inferred from homology"/>
<reference key="1">
    <citation type="submission" date="2007-02" db="EMBL/GenBank/DDBJ databases">
        <title>Complete sequence of Mycobacterium sp. JLS.</title>
        <authorList>
            <consortium name="US DOE Joint Genome Institute"/>
            <person name="Copeland A."/>
            <person name="Lucas S."/>
            <person name="Lapidus A."/>
            <person name="Barry K."/>
            <person name="Detter J.C."/>
            <person name="Glavina del Rio T."/>
            <person name="Hammon N."/>
            <person name="Israni S."/>
            <person name="Dalin E."/>
            <person name="Tice H."/>
            <person name="Pitluck S."/>
            <person name="Chain P."/>
            <person name="Malfatti S."/>
            <person name="Shin M."/>
            <person name="Vergez L."/>
            <person name="Schmutz J."/>
            <person name="Larimer F."/>
            <person name="Land M."/>
            <person name="Hauser L."/>
            <person name="Kyrpides N."/>
            <person name="Mikhailova N."/>
            <person name="Miller C.D."/>
            <person name="Anderson A.J."/>
            <person name="Sims R.C."/>
            <person name="Richardson P."/>
        </authorList>
    </citation>
    <scope>NUCLEOTIDE SEQUENCE [LARGE SCALE GENOMIC DNA]</scope>
    <source>
        <strain>JLS</strain>
    </source>
</reference>
<evidence type="ECO:0000255" key="1">
    <source>
        <dbReference type="HAMAP-Rule" id="MF_01356"/>
    </source>
</evidence>